<accession>A8Z477</accession>
<dbReference type="EC" id="2.7.1.71" evidence="1"/>
<dbReference type="EMBL" id="CP000730">
    <property type="protein sequence ID" value="ABX29546.1"/>
    <property type="molecule type" value="Genomic_DNA"/>
</dbReference>
<dbReference type="RefSeq" id="WP_001015117.1">
    <property type="nucleotide sequence ID" value="NC_010079.1"/>
</dbReference>
<dbReference type="SMR" id="A8Z477"/>
<dbReference type="KEGG" id="sax:USA300HOU_1539"/>
<dbReference type="HOGENOM" id="CLU_057607_4_3_9"/>
<dbReference type="UniPathway" id="UPA00053">
    <property type="reaction ID" value="UER00088"/>
</dbReference>
<dbReference type="GO" id="GO:0005829">
    <property type="term" value="C:cytosol"/>
    <property type="evidence" value="ECO:0007669"/>
    <property type="project" value="TreeGrafter"/>
</dbReference>
<dbReference type="GO" id="GO:0005524">
    <property type="term" value="F:ATP binding"/>
    <property type="evidence" value="ECO:0007669"/>
    <property type="project" value="UniProtKB-UniRule"/>
</dbReference>
<dbReference type="GO" id="GO:0000287">
    <property type="term" value="F:magnesium ion binding"/>
    <property type="evidence" value="ECO:0007669"/>
    <property type="project" value="UniProtKB-UniRule"/>
</dbReference>
<dbReference type="GO" id="GO:0004765">
    <property type="term" value="F:shikimate kinase activity"/>
    <property type="evidence" value="ECO:0007669"/>
    <property type="project" value="UniProtKB-UniRule"/>
</dbReference>
<dbReference type="GO" id="GO:0008652">
    <property type="term" value="P:amino acid biosynthetic process"/>
    <property type="evidence" value="ECO:0007669"/>
    <property type="project" value="UniProtKB-KW"/>
</dbReference>
<dbReference type="GO" id="GO:0009073">
    <property type="term" value="P:aromatic amino acid family biosynthetic process"/>
    <property type="evidence" value="ECO:0007669"/>
    <property type="project" value="UniProtKB-KW"/>
</dbReference>
<dbReference type="GO" id="GO:0009423">
    <property type="term" value="P:chorismate biosynthetic process"/>
    <property type="evidence" value="ECO:0007669"/>
    <property type="project" value="UniProtKB-UniRule"/>
</dbReference>
<dbReference type="CDD" id="cd00464">
    <property type="entry name" value="SK"/>
    <property type="match status" value="1"/>
</dbReference>
<dbReference type="FunFam" id="3.40.50.300:FF:001734">
    <property type="entry name" value="Shikimate kinase"/>
    <property type="match status" value="1"/>
</dbReference>
<dbReference type="Gene3D" id="3.40.50.300">
    <property type="entry name" value="P-loop containing nucleotide triphosphate hydrolases"/>
    <property type="match status" value="1"/>
</dbReference>
<dbReference type="HAMAP" id="MF_00109">
    <property type="entry name" value="Shikimate_kinase"/>
    <property type="match status" value="1"/>
</dbReference>
<dbReference type="InterPro" id="IPR027417">
    <property type="entry name" value="P-loop_NTPase"/>
</dbReference>
<dbReference type="InterPro" id="IPR031322">
    <property type="entry name" value="Shikimate/glucono_kinase"/>
</dbReference>
<dbReference type="InterPro" id="IPR000623">
    <property type="entry name" value="Shikimate_kinase/TSH1"/>
</dbReference>
<dbReference type="InterPro" id="IPR023000">
    <property type="entry name" value="Shikimate_kinase_CS"/>
</dbReference>
<dbReference type="PANTHER" id="PTHR21087">
    <property type="entry name" value="SHIKIMATE KINASE"/>
    <property type="match status" value="1"/>
</dbReference>
<dbReference type="PANTHER" id="PTHR21087:SF16">
    <property type="entry name" value="SHIKIMATE KINASE 1, CHLOROPLASTIC"/>
    <property type="match status" value="1"/>
</dbReference>
<dbReference type="Pfam" id="PF01202">
    <property type="entry name" value="SKI"/>
    <property type="match status" value="1"/>
</dbReference>
<dbReference type="PRINTS" id="PR01100">
    <property type="entry name" value="SHIKIMTKNASE"/>
</dbReference>
<dbReference type="SUPFAM" id="SSF52540">
    <property type="entry name" value="P-loop containing nucleoside triphosphate hydrolases"/>
    <property type="match status" value="1"/>
</dbReference>
<dbReference type="PROSITE" id="PS01128">
    <property type="entry name" value="SHIKIMATE_KINASE"/>
    <property type="match status" value="1"/>
</dbReference>
<sequence>MNHDKSPIILIGFMGTGKSTIGKYVADEQNLSFIDIDSYIEEKYKLTIPEIFCKHGEQYFRNLEFTCLQECINTADIIATGGGIIESEEAFNFLKNQKNIIWLDCNIDIIYSRINDDPHRPNANNKTIKQLNDLYCSRNLRYNEIAFKKFDSHLLSISEIYYELLNLIKASDQY</sequence>
<protein>
    <recommendedName>
        <fullName evidence="1">Shikimate kinase</fullName>
        <shortName evidence="1">SK</shortName>
        <ecNumber evidence="1">2.7.1.71</ecNumber>
    </recommendedName>
</protein>
<gene>
    <name evidence="1" type="primary">aroK</name>
    <name type="ordered locus">USA300HOU_1539</name>
</gene>
<organism>
    <name type="scientific">Staphylococcus aureus (strain USA300 / TCH1516)</name>
    <dbReference type="NCBI Taxonomy" id="451516"/>
    <lineage>
        <taxon>Bacteria</taxon>
        <taxon>Bacillati</taxon>
        <taxon>Bacillota</taxon>
        <taxon>Bacilli</taxon>
        <taxon>Bacillales</taxon>
        <taxon>Staphylococcaceae</taxon>
        <taxon>Staphylococcus</taxon>
    </lineage>
</organism>
<evidence type="ECO:0000255" key="1">
    <source>
        <dbReference type="HAMAP-Rule" id="MF_00109"/>
    </source>
</evidence>
<feature type="chain" id="PRO_1000075962" description="Shikimate kinase">
    <location>
        <begin position="1"/>
        <end position="174"/>
    </location>
</feature>
<feature type="binding site" evidence="1">
    <location>
        <begin position="15"/>
        <end position="20"/>
    </location>
    <ligand>
        <name>ATP</name>
        <dbReference type="ChEBI" id="CHEBI:30616"/>
    </ligand>
</feature>
<feature type="binding site" evidence="1">
    <location>
        <position position="19"/>
    </location>
    <ligand>
        <name>Mg(2+)</name>
        <dbReference type="ChEBI" id="CHEBI:18420"/>
    </ligand>
</feature>
<feature type="binding site" evidence="1">
    <location>
        <position position="37"/>
    </location>
    <ligand>
        <name>substrate</name>
    </ligand>
</feature>
<feature type="binding site" evidence="1">
    <location>
        <position position="61"/>
    </location>
    <ligand>
        <name>substrate</name>
    </ligand>
</feature>
<feature type="binding site" evidence="1">
    <location>
        <position position="82"/>
    </location>
    <ligand>
        <name>substrate</name>
    </ligand>
</feature>
<feature type="binding site" evidence="1">
    <location>
        <position position="120"/>
    </location>
    <ligand>
        <name>ATP</name>
        <dbReference type="ChEBI" id="CHEBI:30616"/>
    </ligand>
</feature>
<feature type="binding site" evidence="1">
    <location>
        <position position="138"/>
    </location>
    <ligand>
        <name>substrate</name>
    </ligand>
</feature>
<keyword id="KW-0028">Amino-acid biosynthesis</keyword>
<keyword id="KW-0057">Aromatic amino acid biosynthesis</keyword>
<keyword id="KW-0067">ATP-binding</keyword>
<keyword id="KW-0963">Cytoplasm</keyword>
<keyword id="KW-0418">Kinase</keyword>
<keyword id="KW-0460">Magnesium</keyword>
<keyword id="KW-0479">Metal-binding</keyword>
<keyword id="KW-0547">Nucleotide-binding</keyword>
<keyword id="KW-0808">Transferase</keyword>
<reference key="1">
    <citation type="journal article" date="2007" name="BMC Microbiol.">
        <title>Subtle genetic changes enhance virulence of methicillin resistant and sensitive Staphylococcus aureus.</title>
        <authorList>
            <person name="Highlander S.K."/>
            <person name="Hulten K.G."/>
            <person name="Qin X."/>
            <person name="Jiang H."/>
            <person name="Yerrapragada S."/>
            <person name="Mason E.O. Jr."/>
            <person name="Shang Y."/>
            <person name="Williams T.M."/>
            <person name="Fortunov R.M."/>
            <person name="Liu Y."/>
            <person name="Igboeli O."/>
            <person name="Petrosino J."/>
            <person name="Tirumalai M."/>
            <person name="Uzman A."/>
            <person name="Fox G.E."/>
            <person name="Cardenas A.M."/>
            <person name="Muzny D.M."/>
            <person name="Hemphill L."/>
            <person name="Ding Y."/>
            <person name="Dugan S."/>
            <person name="Blyth P.R."/>
            <person name="Buhay C.J."/>
            <person name="Dinh H.H."/>
            <person name="Hawes A.C."/>
            <person name="Holder M."/>
            <person name="Kovar C.L."/>
            <person name="Lee S.L."/>
            <person name="Liu W."/>
            <person name="Nazareth L.V."/>
            <person name="Wang Q."/>
            <person name="Zhou J."/>
            <person name="Kaplan S.L."/>
            <person name="Weinstock G.M."/>
        </authorList>
    </citation>
    <scope>NUCLEOTIDE SEQUENCE [LARGE SCALE GENOMIC DNA]</scope>
    <source>
        <strain>USA300 / TCH1516</strain>
    </source>
</reference>
<comment type="function">
    <text evidence="1">Catalyzes the specific phosphorylation of the 3-hydroxyl group of shikimic acid using ATP as a cosubstrate.</text>
</comment>
<comment type="catalytic activity">
    <reaction evidence="1">
        <text>shikimate + ATP = 3-phosphoshikimate + ADP + H(+)</text>
        <dbReference type="Rhea" id="RHEA:13121"/>
        <dbReference type="ChEBI" id="CHEBI:15378"/>
        <dbReference type="ChEBI" id="CHEBI:30616"/>
        <dbReference type="ChEBI" id="CHEBI:36208"/>
        <dbReference type="ChEBI" id="CHEBI:145989"/>
        <dbReference type="ChEBI" id="CHEBI:456216"/>
        <dbReference type="EC" id="2.7.1.71"/>
    </reaction>
</comment>
<comment type="cofactor">
    <cofactor evidence="1">
        <name>Mg(2+)</name>
        <dbReference type="ChEBI" id="CHEBI:18420"/>
    </cofactor>
    <text evidence="1">Binds 1 Mg(2+) ion per subunit.</text>
</comment>
<comment type="pathway">
    <text evidence="1">Metabolic intermediate biosynthesis; chorismate biosynthesis; chorismate from D-erythrose 4-phosphate and phosphoenolpyruvate: step 5/7.</text>
</comment>
<comment type="subunit">
    <text evidence="1">Monomer.</text>
</comment>
<comment type="subcellular location">
    <subcellularLocation>
        <location evidence="1">Cytoplasm</location>
    </subcellularLocation>
</comment>
<comment type="similarity">
    <text evidence="1">Belongs to the shikimate kinase family.</text>
</comment>
<name>AROK_STAAT</name>
<proteinExistence type="inferred from homology"/>